<proteinExistence type="evidence at protein level"/>
<protein>
    <recommendedName>
        <fullName>C-type lectin domain family 2 member L</fullName>
    </recommendedName>
</protein>
<organism>
    <name type="scientific">Homo sapiens</name>
    <name type="common">Human</name>
    <dbReference type="NCBI Taxonomy" id="9606"/>
    <lineage>
        <taxon>Eukaryota</taxon>
        <taxon>Metazoa</taxon>
        <taxon>Chordata</taxon>
        <taxon>Craniata</taxon>
        <taxon>Vertebrata</taxon>
        <taxon>Euteleostomi</taxon>
        <taxon>Mammalia</taxon>
        <taxon>Eutheria</taxon>
        <taxon>Euarchontoglires</taxon>
        <taxon>Primates</taxon>
        <taxon>Haplorrhini</taxon>
        <taxon>Catarrhini</taxon>
        <taxon>Hominidae</taxon>
        <taxon>Homo</taxon>
    </lineage>
</organism>
<evidence type="ECO:0000250" key="1">
    <source>
        <dbReference type="UniProtKB" id="Q0ZCA7"/>
    </source>
</evidence>
<evidence type="ECO:0000255" key="2"/>
<evidence type="ECO:0000255" key="3">
    <source>
        <dbReference type="PROSITE-ProRule" id="PRU00040"/>
    </source>
</evidence>
<evidence type="ECO:0000256" key="4">
    <source>
        <dbReference type="SAM" id="MobiDB-lite"/>
    </source>
</evidence>
<evidence type="ECO:0000305" key="5"/>
<keyword id="KW-1015">Disulfide bond</keyword>
<keyword id="KW-0430">Lectin</keyword>
<keyword id="KW-0472">Membrane</keyword>
<keyword id="KW-0597">Phosphoprotein</keyword>
<keyword id="KW-1267">Proteomics identification</keyword>
<keyword id="KW-1185">Reference proteome</keyword>
<keyword id="KW-0812">Transmembrane</keyword>
<keyword id="KW-1133">Transmembrane helix</keyword>
<gene>
    <name type="primary">CLEC2L</name>
</gene>
<sequence>MEPAREPPSRARPPPPLAARPAPAPAAPRPRSPAEAEARGPEGLLRRSGSGYEGSTSWKAALEDTTTRLLLGAIAVLLFAILVVMSILASKGCIKCEAPCPEDWLLYGRKCYFFSEEPRDWNTGRQYCHTHEAVLAVIQSQKELEFMFKFTRREPWIGLRRVGDEFHWVNGDPFDPDTFTIAGPGECVFVEPTRLVSTECLMTRPWVCSKMAYT</sequence>
<dbReference type="EMBL" id="AC005531">
    <property type="status" value="NOT_ANNOTATED_CDS"/>
    <property type="molecule type" value="Genomic_DNA"/>
</dbReference>
<dbReference type="CCDS" id="CCDS47724.1"/>
<dbReference type="RefSeq" id="NP_001073980.2">
    <property type="nucleotide sequence ID" value="NM_001080511.4"/>
</dbReference>
<dbReference type="SMR" id="P0C7M8"/>
<dbReference type="BioGRID" id="127555">
    <property type="interactions" value="2"/>
</dbReference>
<dbReference type="FunCoup" id="P0C7M8">
    <property type="interactions" value="37"/>
</dbReference>
<dbReference type="STRING" id="9606.ENSP00000390661"/>
<dbReference type="iPTMnet" id="P0C7M8"/>
<dbReference type="PhosphoSitePlus" id="P0C7M8"/>
<dbReference type="BioMuta" id="CLEC2L"/>
<dbReference type="DMDM" id="190358747"/>
<dbReference type="MassIVE" id="P0C7M8"/>
<dbReference type="PaxDb" id="9606-ENSP00000390661"/>
<dbReference type="PeptideAtlas" id="P0C7M8"/>
<dbReference type="ProteomicsDB" id="52347"/>
<dbReference type="Antibodypedia" id="52522">
    <property type="antibodies" value="60 antibodies from 14 providers"/>
</dbReference>
<dbReference type="DNASU" id="154790"/>
<dbReference type="Ensembl" id="ENST00000422142.7">
    <property type="protein sequence ID" value="ENSP00000390661.2"/>
    <property type="gene ID" value="ENSG00000236279.7"/>
</dbReference>
<dbReference type="GeneID" id="154790"/>
<dbReference type="KEGG" id="hsa:154790"/>
<dbReference type="MANE-Select" id="ENST00000422142.7">
    <property type="protein sequence ID" value="ENSP00000390661.2"/>
    <property type="RefSeq nucleotide sequence ID" value="NM_001080511.4"/>
    <property type="RefSeq protein sequence ID" value="NP_001073980.2"/>
</dbReference>
<dbReference type="UCSC" id="uc010lnd.4">
    <property type="organism name" value="human"/>
</dbReference>
<dbReference type="AGR" id="HGNC:21969"/>
<dbReference type="CTD" id="154790"/>
<dbReference type="GeneCards" id="CLEC2L"/>
<dbReference type="HGNC" id="HGNC:21969">
    <property type="gene designation" value="CLEC2L"/>
</dbReference>
<dbReference type="HPA" id="ENSG00000236279">
    <property type="expression patterns" value="Tissue enhanced (brain, parathyroid gland)"/>
</dbReference>
<dbReference type="neXtProt" id="NX_P0C7M8"/>
<dbReference type="OpenTargets" id="ENSG00000236279"/>
<dbReference type="PharmGKB" id="PA142672101"/>
<dbReference type="VEuPathDB" id="HostDB:ENSG00000236279"/>
<dbReference type="eggNOG" id="KOG1766">
    <property type="taxonomic scope" value="Eukaryota"/>
</dbReference>
<dbReference type="eggNOG" id="KOG4297">
    <property type="taxonomic scope" value="Eukaryota"/>
</dbReference>
<dbReference type="GeneTree" id="ENSGT00940000162503"/>
<dbReference type="HOGENOM" id="CLU_1528662_0_0_1"/>
<dbReference type="InParanoid" id="P0C7M8"/>
<dbReference type="OMA" id="CHTHEAS"/>
<dbReference type="OrthoDB" id="8935730at2759"/>
<dbReference type="PAN-GO" id="P0C7M8">
    <property type="GO annotations" value="0 GO annotations based on evolutionary models"/>
</dbReference>
<dbReference type="PhylomeDB" id="P0C7M8"/>
<dbReference type="TreeFam" id="TF351467"/>
<dbReference type="PathwayCommons" id="P0C7M8"/>
<dbReference type="SignaLink" id="P0C7M8"/>
<dbReference type="BioGRID-ORCS" id="154790">
    <property type="hits" value="9 hits in 1151 CRISPR screens"/>
</dbReference>
<dbReference type="GenomeRNAi" id="154790"/>
<dbReference type="Pharos" id="P0C7M8">
    <property type="development level" value="Tdark"/>
</dbReference>
<dbReference type="PRO" id="PR:P0C7M8"/>
<dbReference type="Proteomes" id="UP000005640">
    <property type="component" value="Chromosome 7"/>
</dbReference>
<dbReference type="RNAct" id="P0C7M8">
    <property type="molecule type" value="protein"/>
</dbReference>
<dbReference type="Bgee" id="ENSG00000236279">
    <property type="expression patterns" value="Expressed in prefrontal cortex and 128 other cell types or tissues"/>
</dbReference>
<dbReference type="ExpressionAtlas" id="P0C7M8">
    <property type="expression patterns" value="baseline and differential"/>
</dbReference>
<dbReference type="GO" id="GO:0016020">
    <property type="term" value="C:membrane"/>
    <property type="evidence" value="ECO:0007669"/>
    <property type="project" value="UniProtKB-SubCell"/>
</dbReference>
<dbReference type="GO" id="GO:0030246">
    <property type="term" value="F:carbohydrate binding"/>
    <property type="evidence" value="ECO:0007669"/>
    <property type="project" value="UniProtKB-KW"/>
</dbReference>
<dbReference type="CDD" id="cd03593">
    <property type="entry name" value="CLECT_NK_receptors_like"/>
    <property type="match status" value="1"/>
</dbReference>
<dbReference type="Gene3D" id="3.10.100.10">
    <property type="entry name" value="Mannose-Binding Protein A, subunit A"/>
    <property type="match status" value="1"/>
</dbReference>
<dbReference type="InterPro" id="IPR001304">
    <property type="entry name" value="C-type_lectin-like"/>
</dbReference>
<dbReference type="InterPro" id="IPR016186">
    <property type="entry name" value="C-type_lectin-like/link_sf"/>
</dbReference>
<dbReference type="InterPro" id="IPR016187">
    <property type="entry name" value="CTDL_fold"/>
</dbReference>
<dbReference type="InterPro" id="IPR033992">
    <property type="entry name" value="NKR-like_CTLD"/>
</dbReference>
<dbReference type="PANTHER" id="PTHR47498">
    <property type="entry name" value="C-TYPE LECTIN DOMAIN FAMILY 2 MEMBER L"/>
    <property type="match status" value="1"/>
</dbReference>
<dbReference type="PANTHER" id="PTHR47498:SF1">
    <property type="entry name" value="C-TYPE LECTIN DOMAIN FAMILY 2 MEMBER L"/>
    <property type="match status" value="1"/>
</dbReference>
<dbReference type="Pfam" id="PF00059">
    <property type="entry name" value="Lectin_C"/>
    <property type="match status" value="1"/>
</dbReference>
<dbReference type="SMART" id="SM00034">
    <property type="entry name" value="CLECT"/>
    <property type="match status" value="1"/>
</dbReference>
<dbReference type="SUPFAM" id="SSF56436">
    <property type="entry name" value="C-type lectin-like"/>
    <property type="match status" value="1"/>
</dbReference>
<dbReference type="PROSITE" id="PS00615">
    <property type="entry name" value="C_TYPE_LECTIN_1"/>
    <property type="match status" value="1"/>
</dbReference>
<dbReference type="PROSITE" id="PS50041">
    <property type="entry name" value="C_TYPE_LECTIN_2"/>
    <property type="match status" value="1"/>
</dbReference>
<accession>P0C7M8</accession>
<name>CLC2L_HUMAN</name>
<feature type="chain" id="PRO_0000339385" description="C-type lectin domain family 2 member L">
    <location>
        <begin position="1"/>
        <end position="214"/>
    </location>
</feature>
<feature type="transmembrane region" description="Helical" evidence="2">
    <location>
        <begin position="69"/>
        <end position="89"/>
    </location>
</feature>
<feature type="domain" description="C-type lectin" evidence="3">
    <location>
        <begin position="107"/>
        <end position="209"/>
    </location>
</feature>
<feature type="region of interest" description="Disordered" evidence="4">
    <location>
        <begin position="1"/>
        <end position="56"/>
    </location>
</feature>
<feature type="compositionally biased region" description="Pro residues" evidence="4">
    <location>
        <begin position="10"/>
        <end position="31"/>
    </location>
</feature>
<feature type="modified residue" description="Phosphoserine" evidence="1">
    <location>
        <position position="32"/>
    </location>
</feature>
<feature type="disulfide bond" evidence="3">
    <location>
        <begin position="128"/>
        <end position="208"/>
    </location>
</feature>
<feature type="disulfide bond" evidence="3">
    <location>
        <begin position="187"/>
        <end position="200"/>
    </location>
</feature>
<comment type="subcellular location">
    <subcellularLocation>
        <location evidence="5">Membrane</location>
        <topology evidence="5">Single-pass membrane protein</topology>
    </subcellularLocation>
</comment>
<reference key="1">
    <citation type="journal article" date="2003" name="Nature">
        <title>The DNA sequence of human chromosome 7.</title>
        <authorList>
            <person name="Hillier L.W."/>
            <person name="Fulton R.S."/>
            <person name="Fulton L.A."/>
            <person name="Graves T.A."/>
            <person name="Pepin K.H."/>
            <person name="Wagner-McPherson C."/>
            <person name="Layman D."/>
            <person name="Maas J."/>
            <person name="Jaeger S."/>
            <person name="Walker R."/>
            <person name="Wylie K."/>
            <person name="Sekhon M."/>
            <person name="Becker M.C."/>
            <person name="O'Laughlin M.D."/>
            <person name="Schaller M.E."/>
            <person name="Fewell G.A."/>
            <person name="Delehaunty K.D."/>
            <person name="Miner T.L."/>
            <person name="Nash W.E."/>
            <person name="Cordes M."/>
            <person name="Du H."/>
            <person name="Sun H."/>
            <person name="Edwards J."/>
            <person name="Bradshaw-Cordum H."/>
            <person name="Ali J."/>
            <person name="Andrews S."/>
            <person name="Isak A."/>
            <person name="Vanbrunt A."/>
            <person name="Nguyen C."/>
            <person name="Du F."/>
            <person name="Lamar B."/>
            <person name="Courtney L."/>
            <person name="Kalicki J."/>
            <person name="Ozersky P."/>
            <person name="Bielicki L."/>
            <person name="Scott K."/>
            <person name="Holmes A."/>
            <person name="Harkins R."/>
            <person name="Harris A."/>
            <person name="Strong C.M."/>
            <person name="Hou S."/>
            <person name="Tomlinson C."/>
            <person name="Dauphin-Kohlberg S."/>
            <person name="Kozlowicz-Reilly A."/>
            <person name="Leonard S."/>
            <person name="Rohlfing T."/>
            <person name="Rock S.M."/>
            <person name="Tin-Wollam A.-M."/>
            <person name="Abbott A."/>
            <person name="Minx P."/>
            <person name="Maupin R."/>
            <person name="Strowmatt C."/>
            <person name="Latreille P."/>
            <person name="Miller N."/>
            <person name="Johnson D."/>
            <person name="Murray J."/>
            <person name="Woessner J.P."/>
            <person name="Wendl M.C."/>
            <person name="Yang S.-P."/>
            <person name="Schultz B.R."/>
            <person name="Wallis J.W."/>
            <person name="Spieth J."/>
            <person name="Bieri T.A."/>
            <person name="Nelson J.O."/>
            <person name="Berkowicz N."/>
            <person name="Wohldmann P.E."/>
            <person name="Cook L.L."/>
            <person name="Hickenbotham M.T."/>
            <person name="Eldred J."/>
            <person name="Williams D."/>
            <person name="Bedell J.A."/>
            <person name="Mardis E.R."/>
            <person name="Clifton S.W."/>
            <person name="Chissoe S.L."/>
            <person name="Marra M.A."/>
            <person name="Raymond C."/>
            <person name="Haugen E."/>
            <person name="Gillett W."/>
            <person name="Zhou Y."/>
            <person name="James R."/>
            <person name="Phelps K."/>
            <person name="Iadanoto S."/>
            <person name="Bubb K."/>
            <person name="Simms E."/>
            <person name="Levy R."/>
            <person name="Clendenning J."/>
            <person name="Kaul R."/>
            <person name="Kent W.J."/>
            <person name="Furey T.S."/>
            <person name="Baertsch R.A."/>
            <person name="Brent M.R."/>
            <person name="Keibler E."/>
            <person name="Flicek P."/>
            <person name="Bork P."/>
            <person name="Suyama M."/>
            <person name="Bailey J.A."/>
            <person name="Portnoy M.E."/>
            <person name="Torrents D."/>
            <person name="Chinwalla A.T."/>
            <person name="Gish W.R."/>
            <person name="Eddy S.R."/>
            <person name="McPherson J.D."/>
            <person name="Olson M.V."/>
            <person name="Eichler E.E."/>
            <person name="Green E.D."/>
            <person name="Waterston R.H."/>
            <person name="Wilson R.K."/>
        </authorList>
    </citation>
    <scope>NUCLEOTIDE SEQUENCE [LARGE SCALE GENOMIC DNA]</scope>
</reference>